<reference key="1">
    <citation type="journal article" date="2007" name="PLoS ONE">
        <title>Paradoxical DNA repair and peroxide resistance gene conservation in Bacillus pumilus SAFR-032.</title>
        <authorList>
            <person name="Gioia J."/>
            <person name="Yerrapragada S."/>
            <person name="Qin X."/>
            <person name="Jiang H."/>
            <person name="Igboeli O.C."/>
            <person name="Muzny D."/>
            <person name="Dugan-Rocha S."/>
            <person name="Ding Y."/>
            <person name="Hawes A."/>
            <person name="Liu W."/>
            <person name="Perez L."/>
            <person name="Kovar C."/>
            <person name="Dinh H."/>
            <person name="Lee S."/>
            <person name="Nazareth L."/>
            <person name="Blyth P."/>
            <person name="Holder M."/>
            <person name="Buhay C."/>
            <person name="Tirumalai M.R."/>
            <person name="Liu Y."/>
            <person name="Dasgupta I."/>
            <person name="Bokhetache L."/>
            <person name="Fujita M."/>
            <person name="Karouia F."/>
            <person name="Eswara Moorthy P."/>
            <person name="Siefert J."/>
            <person name="Uzman A."/>
            <person name="Buzumbo P."/>
            <person name="Verma A."/>
            <person name="Zwiya H."/>
            <person name="McWilliams B.D."/>
            <person name="Olowu A."/>
            <person name="Clinkenbeard K.D."/>
            <person name="Newcombe D."/>
            <person name="Golebiewski L."/>
            <person name="Petrosino J.F."/>
            <person name="Nicholson W.L."/>
            <person name="Fox G.E."/>
            <person name="Venkateswaran K."/>
            <person name="Highlander S.K."/>
            <person name="Weinstock G.M."/>
        </authorList>
    </citation>
    <scope>NUCLEOTIDE SEQUENCE [LARGE SCALE GENOMIC DNA]</scope>
    <source>
        <strain>SAFR-032</strain>
    </source>
</reference>
<feature type="chain" id="PRO_0000382278" description="Glutamate-1-semialdehyde 2,1-aminomutase 2">
    <location>
        <begin position="1"/>
        <end position="430"/>
    </location>
</feature>
<feature type="modified residue" description="N6-(pyridoxal phosphate)lysine" evidence="1">
    <location>
        <position position="269"/>
    </location>
</feature>
<accession>A8FFU9</accession>
<proteinExistence type="inferred from homology"/>
<name>GSA2_BACP2</name>
<organism>
    <name type="scientific">Bacillus pumilus (strain SAFR-032)</name>
    <dbReference type="NCBI Taxonomy" id="315750"/>
    <lineage>
        <taxon>Bacteria</taxon>
        <taxon>Bacillati</taxon>
        <taxon>Bacillota</taxon>
        <taxon>Bacilli</taxon>
        <taxon>Bacillales</taxon>
        <taxon>Bacillaceae</taxon>
        <taxon>Bacillus</taxon>
    </lineage>
</organism>
<protein>
    <recommendedName>
        <fullName evidence="1">Glutamate-1-semialdehyde 2,1-aminomutase 2</fullName>
        <shortName evidence="1">GSA 2</shortName>
        <ecNumber evidence="1">5.4.3.8</ecNumber>
    </recommendedName>
    <alternativeName>
        <fullName evidence="1">Glutamate-1-semialdehyde aminotransferase 2</fullName>
        <shortName evidence="1">GSA-AT 2</shortName>
    </alternativeName>
</protein>
<comment type="catalytic activity">
    <reaction evidence="1">
        <text>(S)-4-amino-5-oxopentanoate = 5-aminolevulinate</text>
        <dbReference type="Rhea" id="RHEA:14265"/>
        <dbReference type="ChEBI" id="CHEBI:57501"/>
        <dbReference type="ChEBI" id="CHEBI:356416"/>
        <dbReference type="EC" id="5.4.3.8"/>
    </reaction>
</comment>
<comment type="cofactor">
    <cofactor evidence="1">
        <name>pyridoxal 5'-phosphate</name>
        <dbReference type="ChEBI" id="CHEBI:597326"/>
    </cofactor>
</comment>
<comment type="pathway">
    <text evidence="1">Porphyrin-containing compound metabolism; protoporphyrin-IX biosynthesis; 5-aminolevulinate from L-glutamyl-tRNA(Glu): step 2/2.</text>
</comment>
<comment type="subunit">
    <text evidence="1">Homodimer.</text>
</comment>
<comment type="subcellular location">
    <subcellularLocation>
        <location evidence="1">Cytoplasm</location>
    </subcellularLocation>
</comment>
<comment type="similarity">
    <text evidence="1">Belongs to the class-III pyridoxal-phosphate-dependent aminotransferase family. HemL subfamily.</text>
</comment>
<gene>
    <name evidence="1" type="primary">hemL2</name>
    <name type="ordered locus">BPUM_2453</name>
</gene>
<sequence>MGRSYEKSKQAFEEAQHLMPGGVNSPVRAFKSVNTDPIFMERGKGAKIYDIDGNEYIDYVLSWGPLILGHTNDRVVESIQRVAEKGTSFGASTLVENELAKLVSERVPSIEVIRMVSSGTEATMSALRLARGFTGRNKIVKFEGCYHGHGDSLLIKAGSGVATLGLPDSPGVPEGTASNTITVPYNDLESIQVAFQEFGDDIAGVIVEPVAGNMGVVPPQDGFLQGLRDITEQYGALLIFDEVMTGFRVDYHCAQGYFGVTPDLTCLGKVIGGGLPVGAYGGRADIMRQIAPSGPIYQAGTLSGNPLAMTAGLETLKQLTPESYEEFRRKGDRLEEGISNAAKTHGIPLTFNRAGSMIGFFFTDEEVINYDIAKNADLALFAEFYKEMADHGIFLPPSQFEGLFLSTAHTDEDIEYTIETVEKVFQKLRR</sequence>
<dbReference type="EC" id="5.4.3.8" evidence="1"/>
<dbReference type="EMBL" id="CP000813">
    <property type="protein sequence ID" value="ABV63116.1"/>
    <property type="molecule type" value="Genomic_DNA"/>
</dbReference>
<dbReference type="SMR" id="A8FFU9"/>
<dbReference type="STRING" id="315750.BPUM_2453"/>
<dbReference type="GeneID" id="5621717"/>
<dbReference type="KEGG" id="bpu:BPUM_2453"/>
<dbReference type="eggNOG" id="COG0001">
    <property type="taxonomic scope" value="Bacteria"/>
</dbReference>
<dbReference type="HOGENOM" id="CLU_016922_1_5_9"/>
<dbReference type="OrthoDB" id="9807885at2"/>
<dbReference type="UniPathway" id="UPA00251">
    <property type="reaction ID" value="UER00317"/>
</dbReference>
<dbReference type="Proteomes" id="UP000001355">
    <property type="component" value="Chromosome"/>
</dbReference>
<dbReference type="GO" id="GO:0005737">
    <property type="term" value="C:cytoplasm"/>
    <property type="evidence" value="ECO:0007669"/>
    <property type="project" value="UniProtKB-SubCell"/>
</dbReference>
<dbReference type="GO" id="GO:0042286">
    <property type="term" value="F:glutamate-1-semialdehyde 2,1-aminomutase activity"/>
    <property type="evidence" value="ECO:0007669"/>
    <property type="project" value="UniProtKB-UniRule"/>
</dbReference>
<dbReference type="GO" id="GO:0030170">
    <property type="term" value="F:pyridoxal phosphate binding"/>
    <property type="evidence" value="ECO:0007669"/>
    <property type="project" value="InterPro"/>
</dbReference>
<dbReference type="GO" id="GO:0008483">
    <property type="term" value="F:transaminase activity"/>
    <property type="evidence" value="ECO:0007669"/>
    <property type="project" value="InterPro"/>
</dbReference>
<dbReference type="GO" id="GO:0006782">
    <property type="term" value="P:protoporphyrinogen IX biosynthetic process"/>
    <property type="evidence" value="ECO:0007669"/>
    <property type="project" value="UniProtKB-UniRule"/>
</dbReference>
<dbReference type="CDD" id="cd00610">
    <property type="entry name" value="OAT_like"/>
    <property type="match status" value="1"/>
</dbReference>
<dbReference type="FunFam" id="3.40.640.10:FF:000021">
    <property type="entry name" value="Glutamate-1-semialdehyde 2,1-aminomutase"/>
    <property type="match status" value="1"/>
</dbReference>
<dbReference type="Gene3D" id="3.90.1150.10">
    <property type="entry name" value="Aspartate Aminotransferase, domain 1"/>
    <property type="match status" value="1"/>
</dbReference>
<dbReference type="Gene3D" id="3.40.640.10">
    <property type="entry name" value="Type I PLP-dependent aspartate aminotransferase-like (Major domain)"/>
    <property type="match status" value="1"/>
</dbReference>
<dbReference type="HAMAP" id="MF_00375">
    <property type="entry name" value="HemL_aminotrans_3"/>
    <property type="match status" value="1"/>
</dbReference>
<dbReference type="InterPro" id="IPR004639">
    <property type="entry name" value="4pyrrol_synth_GluAld_NH2Trfase"/>
</dbReference>
<dbReference type="InterPro" id="IPR005814">
    <property type="entry name" value="Aminotrans_3"/>
</dbReference>
<dbReference type="InterPro" id="IPR049704">
    <property type="entry name" value="Aminotrans_3_PPA_site"/>
</dbReference>
<dbReference type="InterPro" id="IPR015424">
    <property type="entry name" value="PyrdxlP-dep_Trfase"/>
</dbReference>
<dbReference type="InterPro" id="IPR015421">
    <property type="entry name" value="PyrdxlP-dep_Trfase_major"/>
</dbReference>
<dbReference type="InterPro" id="IPR015422">
    <property type="entry name" value="PyrdxlP-dep_Trfase_small"/>
</dbReference>
<dbReference type="NCBIfam" id="TIGR00713">
    <property type="entry name" value="hemL"/>
    <property type="match status" value="1"/>
</dbReference>
<dbReference type="NCBIfam" id="NF000818">
    <property type="entry name" value="PRK00062.1"/>
    <property type="match status" value="1"/>
</dbReference>
<dbReference type="PANTHER" id="PTHR43713">
    <property type="entry name" value="GLUTAMATE-1-SEMIALDEHYDE 2,1-AMINOMUTASE"/>
    <property type="match status" value="1"/>
</dbReference>
<dbReference type="PANTHER" id="PTHR43713:SF3">
    <property type="entry name" value="GLUTAMATE-1-SEMIALDEHYDE 2,1-AMINOMUTASE 1, CHLOROPLASTIC-RELATED"/>
    <property type="match status" value="1"/>
</dbReference>
<dbReference type="Pfam" id="PF00202">
    <property type="entry name" value="Aminotran_3"/>
    <property type="match status" value="1"/>
</dbReference>
<dbReference type="SUPFAM" id="SSF53383">
    <property type="entry name" value="PLP-dependent transferases"/>
    <property type="match status" value="1"/>
</dbReference>
<dbReference type="PROSITE" id="PS00600">
    <property type="entry name" value="AA_TRANSFER_CLASS_3"/>
    <property type="match status" value="1"/>
</dbReference>
<keyword id="KW-0963">Cytoplasm</keyword>
<keyword id="KW-0413">Isomerase</keyword>
<keyword id="KW-0627">Porphyrin biosynthesis</keyword>
<keyword id="KW-0663">Pyridoxal phosphate</keyword>
<evidence type="ECO:0000255" key="1">
    <source>
        <dbReference type="HAMAP-Rule" id="MF_00375"/>
    </source>
</evidence>